<comment type="function">
    <text evidence="6 7 8 9">rRNA N6-methyltransferase that specifically methylates the adenine in position 4220 of 28S rRNA (PubMed:30531910, PubMed:31328227, PubMed:31695039, PubMed:31799605). N6-methylation of adenine(4220) in 28S rRNA is required for translation (PubMed:30531910, PubMed:31799605).</text>
</comment>
<comment type="catalytic activity">
    <reaction evidence="6 7 8 9">
        <text>adenosine(4220) in 28S rRNA + S-adenosyl-L-methionine = N(6)-methyladenosine(4220) in 28S rRNA + S-adenosyl-L-homocysteine + H(+)</text>
        <dbReference type="Rhea" id="RHEA:58724"/>
        <dbReference type="Rhea" id="RHEA-COMP:16142"/>
        <dbReference type="Rhea" id="RHEA-COMP:16143"/>
        <dbReference type="ChEBI" id="CHEBI:15378"/>
        <dbReference type="ChEBI" id="CHEBI:57856"/>
        <dbReference type="ChEBI" id="CHEBI:59789"/>
        <dbReference type="ChEBI" id="CHEBI:74411"/>
        <dbReference type="ChEBI" id="CHEBI:74449"/>
    </reaction>
    <physiologicalReaction direction="left-to-right" evidence="6 7 8 9">
        <dbReference type="Rhea" id="RHEA:58725"/>
    </physiologicalReaction>
</comment>
<comment type="subunit">
    <text evidence="9">Interacts with components of the ASC-1 complex TRIP4, ASCC1, ASCC2 and ASCC3 (PubMed:31799605). Interact with AHCYL1 and AHCYL2 (PubMed:31799605). Interact with YTHDC2 (PubMed:31799605).</text>
</comment>
<comment type="subcellular location">
    <subcellularLocation>
        <location evidence="6 9">Nucleus</location>
        <location evidence="6 9">Nucleolus</location>
    </subcellularLocation>
    <subcellularLocation>
        <location evidence="6">Cytoplasm</location>
    </subcellularLocation>
    <text evidence="6">Accumulates in the nucleolus, where ribosome biogenesis takes place.</text>
</comment>
<comment type="alternative products">
    <event type="alternative splicing"/>
    <isoform>
        <id>Q9H5U6-1</id>
        <name>1</name>
        <sequence type="displayed"/>
    </isoform>
    <isoform>
        <id>Q9H5U6-2</id>
        <name>2</name>
        <sequence type="described" ref="VSP_043359"/>
    </isoform>
    <isoform>
        <id>Q9H5U6-3</id>
        <name>3</name>
        <sequence type="described" ref="VSP_043360"/>
    </isoform>
</comment>
<comment type="domain">
    <text evidence="8">The regulatory loop blocks the catalytic center by bridging the methyltransferase domain and the C-terminal CCHC-type zinc finger, resulting in an autoinhibitory conformation.</text>
</comment>
<comment type="similarity">
    <text evidence="13">Belongs to the ZCCHC4 family.</text>
</comment>
<comment type="sequence caution" evidence="13">
    <conflict type="erroneous initiation">
        <sequence resource="EMBL-CDS" id="AAH16914"/>
    </conflict>
    <text>Truncated N-terminus.</text>
</comment>
<comment type="sequence caution" evidence="13">
    <conflict type="erroneous initiation">
        <sequence resource="EMBL-CDS" id="BAB15524"/>
    </conflict>
    <text>Truncated N-terminus.</text>
</comment>
<organism>
    <name type="scientific">Homo sapiens</name>
    <name type="common">Human</name>
    <dbReference type="NCBI Taxonomy" id="9606"/>
    <lineage>
        <taxon>Eukaryota</taxon>
        <taxon>Metazoa</taxon>
        <taxon>Chordata</taxon>
        <taxon>Craniata</taxon>
        <taxon>Vertebrata</taxon>
        <taxon>Euteleostomi</taxon>
        <taxon>Mammalia</taxon>
        <taxon>Eutheria</taxon>
        <taxon>Euarchontoglires</taxon>
        <taxon>Primates</taxon>
        <taxon>Haplorrhini</taxon>
        <taxon>Catarrhini</taxon>
        <taxon>Hominidae</taxon>
        <taxon>Homo</taxon>
    </lineage>
</organism>
<gene>
    <name evidence="12 14" type="primary">ZCCHC4</name>
</gene>
<proteinExistence type="evidence at protein level"/>
<reference key="1">
    <citation type="submission" date="2004-05" db="EMBL/GenBank/DDBJ databases">
        <title>Homo sapiens zinc finger, DHHC domain containing, similar to Mus musculus 4930449I23Rik.</title>
        <authorList>
            <person name="Yue L."/>
            <person name="Zou X."/>
            <person name="Ci H."/>
            <person name="Li Y."/>
        </authorList>
    </citation>
    <scope>NUCLEOTIDE SEQUENCE [MRNA] (ISOFORM 1)</scope>
    <source>
        <tissue>Testis</tissue>
    </source>
</reference>
<reference key="2">
    <citation type="submission" date="2005-07" db="EMBL/GenBank/DDBJ databases">
        <authorList>
            <person name="Mural R.J."/>
            <person name="Istrail S."/>
            <person name="Sutton G.G."/>
            <person name="Florea L."/>
            <person name="Halpern A.L."/>
            <person name="Mobarry C.M."/>
            <person name="Lippert R."/>
            <person name="Walenz B."/>
            <person name="Shatkay H."/>
            <person name="Dew I."/>
            <person name="Miller J.R."/>
            <person name="Flanigan M.J."/>
            <person name="Edwards N.J."/>
            <person name="Bolanos R."/>
            <person name="Fasulo D."/>
            <person name="Halldorsson B.V."/>
            <person name="Hannenhalli S."/>
            <person name="Turner R."/>
            <person name="Yooseph S."/>
            <person name="Lu F."/>
            <person name="Nusskern D.R."/>
            <person name="Shue B.C."/>
            <person name="Zheng X.H."/>
            <person name="Zhong F."/>
            <person name="Delcher A.L."/>
            <person name="Huson D.H."/>
            <person name="Kravitz S.A."/>
            <person name="Mouchard L."/>
            <person name="Reinert K."/>
            <person name="Remington K.A."/>
            <person name="Clark A.G."/>
            <person name="Waterman M.S."/>
            <person name="Eichler E.E."/>
            <person name="Adams M.D."/>
            <person name="Hunkapiller M.W."/>
            <person name="Myers E.W."/>
            <person name="Venter J.C."/>
        </authorList>
    </citation>
    <scope>NUCLEOTIDE SEQUENCE [LARGE SCALE GENOMIC DNA]</scope>
    <scope>VARIANT HIS-396</scope>
</reference>
<reference key="3">
    <citation type="journal article" date="2004" name="Nat. Genet.">
        <title>Complete sequencing and characterization of 21,243 full-length human cDNAs.</title>
        <authorList>
            <person name="Ota T."/>
            <person name="Suzuki Y."/>
            <person name="Nishikawa T."/>
            <person name="Otsuki T."/>
            <person name="Sugiyama T."/>
            <person name="Irie R."/>
            <person name="Wakamatsu A."/>
            <person name="Hayashi K."/>
            <person name="Sato H."/>
            <person name="Nagai K."/>
            <person name="Kimura K."/>
            <person name="Makita H."/>
            <person name="Sekine M."/>
            <person name="Obayashi M."/>
            <person name="Nishi T."/>
            <person name="Shibahara T."/>
            <person name="Tanaka T."/>
            <person name="Ishii S."/>
            <person name="Yamamoto J."/>
            <person name="Saito K."/>
            <person name="Kawai Y."/>
            <person name="Isono Y."/>
            <person name="Nakamura Y."/>
            <person name="Nagahari K."/>
            <person name="Murakami K."/>
            <person name="Yasuda T."/>
            <person name="Iwayanagi T."/>
            <person name="Wagatsuma M."/>
            <person name="Shiratori A."/>
            <person name="Sudo H."/>
            <person name="Hosoiri T."/>
            <person name="Kaku Y."/>
            <person name="Kodaira H."/>
            <person name="Kondo H."/>
            <person name="Sugawara M."/>
            <person name="Takahashi M."/>
            <person name="Kanda K."/>
            <person name="Yokoi T."/>
            <person name="Furuya T."/>
            <person name="Kikkawa E."/>
            <person name="Omura Y."/>
            <person name="Abe K."/>
            <person name="Kamihara K."/>
            <person name="Katsuta N."/>
            <person name="Sato K."/>
            <person name="Tanikawa M."/>
            <person name="Yamazaki M."/>
            <person name="Ninomiya K."/>
            <person name="Ishibashi T."/>
            <person name="Yamashita H."/>
            <person name="Murakawa K."/>
            <person name="Fujimori K."/>
            <person name="Tanai H."/>
            <person name="Kimata M."/>
            <person name="Watanabe M."/>
            <person name="Hiraoka S."/>
            <person name="Chiba Y."/>
            <person name="Ishida S."/>
            <person name="Ono Y."/>
            <person name="Takiguchi S."/>
            <person name="Watanabe S."/>
            <person name="Yosida M."/>
            <person name="Hotuta T."/>
            <person name="Kusano J."/>
            <person name="Kanehori K."/>
            <person name="Takahashi-Fujii A."/>
            <person name="Hara H."/>
            <person name="Tanase T.-O."/>
            <person name="Nomura Y."/>
            <person name="Togiya S."/>
            <person name="Komai F."/>
            <person name="Hara R."/>
            <person name="Takeuchi K."/>
            <person name="Arita M."/>
            <person name="Imose N."/>
            <person name="Musashino K."/>
            <person name="Yuuki H."/>
            <person name="Oshima A."/>
            <person name="Sasaki N."/>
            <person name="Aotsuka S."/>
            <person name="Yoshikawa Y."/>
            <person name="Matsunawa H."/>
            <person name="Ichihara T."/>
            <person name="Shiohata N."/>
            <person name="Sano S."/>
            <person name="Moriya S."/>
            <person name="Momiyama H."/>
            <person name="Satoh N."/>
            <person name="Takami S."/>
            <person name="Terashima Y."/>
            <person name="Suzuki O."/>
            <person name="Nakagawa S."/>
            <person name="Senoh A."/>
            <person name="Mizoguchi H."/>
            <person name="Goto Y."/>
            <person name="Shimizu F."/>
            <person name="Wakebe H."/>
            <person name="Hishigaki H."/>
            <person name="Watanabe T."/>
            <person name="Sugiyama A."/>
            <person name="Takemoto M."/>
            <person name="Kawakami B."/>
            <person name="Yamazaki M."/>
            <person name="Watanabe K."/>
            <person name="Kumagai A."/>
            <person name="Itakura S."/>
            <person name="Fukuzumi Y."/>
            <person name="Fujimori Y."/>
            <person name="Komiyama M."/>
            <person name="Tashiro H."/>
            <person name="Tanigami A."/>
            <person name="Fujiwara T."/>
            <person name="Ono T."/>
            <person name="Yamada K."/>
            <person name="Fujii Y."/>
            <person name="Ozaki K."/>
            <person name="Hirao M."/>
            <person name="Ohmori Y."/>
            <person name="Kawabata A."/>
            <person name="Hikiji T."/>
            <person name="Kobatake N."/>
            <person name="Inagaki H."/>
            <person name="Ikema Y."/>
            <person name="Okamoto S."/>
            <person name="Okitani R."/>
            <person name="Kawakami T."/>
            <person name="Noguchi S."/>
            <person name="Itoh T."/>
            <person name="Shigeta K."/>
            <person name="Senba T."/>
            <person name="Matsumura K."/>
            <person name="Nakajima Y."/>
            <person name="Mizuno T."/>
            <person name="Morinaga M."/>
            <person name="Sasaki M."/>
            <person name="Togashi T."/>
            <person name="Oyama M."/>
            <person name="Hata H."/>
            <person name="Watanabe M."/>
            <person name="Komatsu T."/>
            <person name="Mizushima-Sugano J."/>
            <person name="Satoh T."/>
            <person name="Shirai Y."/>
            <person name="Takahashi Y."/>
            <person name="Nakagawa K."/>
            <person name="Okumura K."/>
            <person name="Nagase T."/>
            <person name="Nomura N."/>
            <person name="Kikuchi H."/>
            <person name="Masuho Y."/>
            <person name="Yamashita R."/>
            <person name="Nakai K."/>
            <person name="Yada T."/>
            <person name="Nakamura Y."/>
            <person name="Ohara O."/>
            <person name="Isogai T."/>
            <person name="Sugano S."/>
        </authorList>
    </citation>
    <scope>NUCLEOTIDE SEQUENCE [LARGE SCALE MRNA] (ISOFORM 1)</scope>
    <scope>VARIANT HIS-396</scope>
    <source>
        <tissue>Lung</tissue>
        <tissue>Teratocarcinoma</tissue>
    </source>
</reference>
<reference key="4">
    <citation type="journal article" date="2004" name="Genome Res.">
        <title>The status, quality, and expansion of the NIH full-length cDNA project: the Mammalian Gene Collection (MGC).</title>
        <authorList>
            <consortium name="The MGC Project Team"/>
        </authorList>
    </citation>
    <scope>NUCLEOTIDE SEQUENCE [LARGE SCALE MRNA] (ISOFORMS 1; 2 AND 3)</scope>
    <scope>VARIANT HIS-396</scope>
    <source>
        <tissue>Brain cortex</tissue>
        <tissue>Kidney</tissue>
    </source>
</reference>
<reference key="5">
    <citation type="journal article" date="2004" name="FEBS Lett.">
        <title>Novel Sm-like proteins with long C-terminal tails and associated methyltransferases.</title>
        <authorList>
            <person name="Albrecht M."/>
            <person name="Lengauer T."/>
        </authorList>
    </citation>
    <scope>PRELIMINARY CHARACTERIZATION</scope>
</reference>
<reference key="6">
    <citation type="journal article" date="2019" name="Nat. Chem. Biol.">
        <title>N6-methyladenosine methyltransferase ZCCHC4 mediates ribosomal RNA methylation.</title>
        <authorList>
            <person name="Ma H."/>
            <person name="Wang X."/>
            <person name="Cai J."/>
            <person name="Dai Q."/>
            <person name="Natchiar S.K."/>
            <person name="Lv R."/>
            <person name="Chen K."/>
            <person name="Lu Z."/>
            <person name="Chen H."/>
            <person name="Shi Y.G."/>
            <person name="Lan F."/>
            <person name="Fan J."/>
            <person name="Klaholz B.P."/>
            <person name="Pan T."/>
            <person name="Shi Y."/>
            <person name="He C."/>
        </authorList>
    </citation>
    <scope>FUNCTION</scope>
    <scope>CATALYTIC ACTIVITY</scope>
    <scope>SUBCELLULAR LOCATION</scope>
    <scope>MUTAGENESIS OF 276-ASP--PHE-279</scope>
</reference>
<reference key="7">
    <citation type="journal article" date="2019" name="Nucleic Acids Res.">
        <title>The human 18S rRNA m6A methyltransferase METTL5 is stabilized by TRMT112.</title>
        <authorList>
            <person name="van Tran N."/>
            <person name="Ernst F.G.M."/>
            <person name="Hawley B.R."/>
            <person name="Zorbas C."/>
            <person name="Ulryck N."/>
            <person name="Hackert P."/>
            <person name="Bohnsack K.E."/>
            <person name="Bohnsack M.T."/>
            <person name="Jaffrey S.R."/>
            <person name="Graille M."/>
            <person name="Lafontaine D.L.J."/>
        </authorList>
    </citation>
    <scope>FUNCTION</scope>
    <scope>CATALYTIC ACTIVITY</scope>
</reference>
<reference key="8">
    <citation type="journal article" date="2020" name="Nucleic Acids Res.">
        <title>The human methyltransferase ZCCHC4 catalyses N6-methyladenosine modification of 28S ribosomal RNA.</title>
        <authorList>
            <person name="Pinto R."/>
            <person name="Vaagboe C.B."/>
            <person name="Jakobsson M.E."/>
            <person name="Kim Y."/>
            <person name="Baltissen M.P."/>
            <person name="O'Donohue M.F."/>
            <person name="Guzman U.H."/>
            <person name="Malecki J.M."/>
            <person name="Wu J."/>
            <person name="Kirpekar F."/>
            <person name="Olsen J.V."/>
            <person name="Gleizes P.E."/>
            <person name="Vermeulen M."/>
            <person name="Leidel S.A."/>
            <person name="Slupphaug G."/>
            <person name="Falnes P.O."/>
        </authorList>
    </citation>
    <scope>FUNCTION</scope>
    <scope>CATALYTIC ACTIVITY</scope>
    <scope>SUBCELLULAR LOCATION</scope>
    <scope>INTERACTION WITH TRIP4; ASCC1; ASCC2; ASCC3; AHCYL1; AHCYL2 AND YTHDC2</scope>
    <scope>MUTAGENESIS OF ASP-276</scope>
</reference>
<reference evidence="15" key="9">
    <citation type="journal article" date="2019" name="Nat. Commun.">
        <title>Structure and regulation of ZCCHC4 in m6A-methylation of 28S rRNA.</title>
        <authorList>
            <person name="Ren W."/>
            <person name="Lu J."/>
            <person name="Huang M."/>
            <person name="Gao L."/>
            <person name="Li D."/>
            <person name="Wang G.G."/>
            <person name="Song J."/>
        </authorList>
    </citation>
    <scope>X-RAY CRYSTALLOGRAPHY (3.10 ANGSTROMS) OF 24-464 IN COMPLEX WITH S-ADENOSYL-L-METHIONINE AND ZINC</scope>
    <scope>FUNCTION</scope>
    <scope>CATALYTIC ACTIVITY</scope>
    <scope>DOMAIN</scope>
    <scope>MUTAGENESIS OF TYR-173; TYR-340; ASP-341; ASN-342; HIS-343 AND LEU-345</scope>
</reference>
<accession>Q9H5U6</accession>
<accession>B2RXF6</accession>
<accession>B4DRD8</accession>
<accession>B7ZW20</accession>
<accession>Q5IW78</accession>
<accession>Q96AN7</accession>
<dbReference type="EC" id="2.1.1.-" evidence="6 7 9"/>
<dbReference type="EMBL" id="AY629351">
    <property type="protein sequence ID" value="AAV41218.1"/>
    <property type="molecule type" value="mRNA"/>
</dbReference>
<dbReference type="EMBL" id="CH471069">
    <property type="protein sequence ID" value="EAW92837.1"/>
    <property type="molecule type" value="Genomic_DNA"/>
</dbReference>
<dbReference type="EMBL" id="AK299211">
    <property type="protein sequence ID" value="BAG61250.1"/>
    <property type="molecule type" value="mRNA"/>
</dbReference>
<dbReference type="EMBL" id="AK026677">
    <property type="protein sequence ID" value="BAB15524.1"/>
    <property type="status" value="ALT_INIT"/>
    <property type="molecule type" value="mRNA"/>
</dbReference>
<dbReference type="EMBL" id="BC016914">
    <property type="protein sequence ID" value="AAH16914.1"/>
    <property type="status" value="ALT_INIT"/>
    <property type="molecule type" value="mRNA"/>
</dbReference>
<dbReference type="EMBL" id="BC157834">
    <property type="protein sequence ID" value="AAI57835.1"/>
    <property type="molecule type" value="mRNA"/>
</dbReference>
<dbReference type="EMBL" id="BC171821">
    <property type="protein sequence ID" value="AAI71821.1"/>
    <property type="molecule type" value="mRNA"/>
</dbReference>
<dbReference type="CCDS" id="CCDS43218.1">
    <molecule id="Q9H5U6-1"/>
</dbReference>
<dbReference type="RefSeq" id="NP_079212.2">
    <molecule id="Q9H5U6-1"/>
    <property type="nucleotide sequence ID" value="NM_024936.2"/>
</dbReference>
<dbReference type="PDB" id="6UCA">
    <property type="method" value="X-ray"/>
    <property type="resolution" value="3.10 A"/>
    <property type="chains" value="A/B/C/D/E/F=24-464"/>
</dbReference>
<dbReference type="PDBsum" id="6UCA"/>
<dbReference type="SMR" id="Q9H5U6"/>
<dbReference type="BioGRID" id="118838">
    <property type="interactions" value="9"/>
</dbReference>
<dbReference type="FunCoup" id="Q9H5U6">
    <property type="interactions" value="3245"/>
</dbReference>
<dbReference type="IntAct" id="Q9H5U6">
    <property type="interactions" value="1"/>
</dbReference>
<dbReference type="STRING" id="9606.ENSP00000303468"/>
<dbReference type="GlyGen" id="Q9H5U6">
    <property type="glycosylation" value="1 site, 1 N-linked glycan (1 site)"/>
</dbReference>
<dbReference type="iPTMnet" id="Q9H5U6"/>
<dbReference type="PhosphoSitePlus" id="Q9H5U6"/>
<dbReference type="BioMuta" id="ZCCHC4"/>
<dbReference type="DMDM" id="85700439"/>
<dbReference type="jPOST" id="Q9H5U6"/>
<dbReference type="MassIVE" id="Q9H5U6"/>
<dbReference type="PaxDb" id="9606-ENSP00000303468"/>
<dbReference type="PeptideAtlas" id="Q9H5U6"/>
<dbReference type="ProteomicsDB" id="80928">
    <molecule id="Q9H5U6-1"/>
</dbReference>
<dbReference type="ProteomicsDB" id="80929">
    <molecule id="Q9H5U6-2"/>
</dbReference>
<dbReference type="ProteomicsDB" id="80930">
    <molecule id="Q9H5U6-3"/>
</dbReference>
<dbReference type="Pumba" id="Q9H5U6"/>
<dbReference type="Antibodypedia" id="23199">
    <property type="antibodies" value="74 antibodies from 14 providers"/>
</dbReference>
<dbReference type="DNASU" id="29063"/>
<dbReference type="Ensembl" id="ENST00000302874.9">
    <molecule id="Q9H5U6-1"/>
    <property type="protein sequence ID" value="ENSP00000303468.4"/>
    <property type="gene ID" value="ENSG00000168228.16"/>
</dbReference>
<dbReference type="Ensembl" id="ENST00000507760.5">
    <molecule id="Q9H5U6-2"/>
    <property type="protein sequence ID" value="ENSP00000422115.1"/>
    <property type="gene ID" value="ENSG00000168228.16"/>
</dbReference>
<dbReference type="GeneID" id="29063"/>
<dbReference type="KEGG" id="hsa:29063"/>
<dbReference type="MANE-Select" id="ENST00000302874.9">
    <property type="protein sequence ID" value="ENSP00000303468.4"/>
    <property type="RefSeq nucleotide sequence ID" value="NM_024936.3"/>
    <property type="RefSeq protein sequence ID" value="NP_079212.2"/>
</dbReference>
<dbReference type="UCSC" id="uc003grl.5">
    <molecule id="Q9H5U6-1"/>
    <property type="organism name" value="human"/>
</dbReference>
<dbReference type="AGR" id="HGNC:22917"/>
<dbReference type="CTD" id="29063"/>
<dbReference type="DisGeNET" id="29063"/>
<dbReference type="GeneCards" id="ZCCHC4"/>
<dbReference type="HGNC" id="HGNC:22917">
    <property type="gene designation" value="ZCCHC4"/>
</dbReference>
<dbReference type="HPA" id="ENSG00000168228">
    <property type="expression patterns" value="Low tissue specificity"/>
</dbReference>
<dbReference type="MIM" id="611792">
    <property type="type" value="gene"/>
</dbReference>
<dbReference type="neXtProt" id="NX_Q9H5U6"/>
<dbReference type="OpenTargets" id="ENSG00000168228"/>
<dbReference type="PharmGKB" id="PA134950003"/>
<dbReference type="VEuPathDB" id="HostDB:ENSG00000168228"/>
<dbReference type="eggNOG" id="KOG4399">
    <property type="taxonomic scope" value="Eukaryota"/>
</dbReference>
<dbReference type="GeneTree" id="ENSGT00390000012556"/>
<dbReference type="HOGENOM" id="CLU_034589_0_0_1"/>
<dbReference type="InParanoid" id="Q9H5U6"/>
<dbReference type="OMA" id="FPYFMEH"/>
<dbReference type="OrthoDB" id="431817at2759"/>
<dbReference type="PAN-GO" id="Q9H5U6">
    <property type="GO annotations" value="4 GO annotations based on evolutionary models"/>
</dbReference>
<dbReference type="PhylomeDB" id="Q9H5U6"/>
<dbReference type="TreeFam" id="TF313872"/>
<dbReference type="PathwayCommons" id="Q9H5U6"/>
<dbReference type="SignaLink" id="Q9H5U6"/>
<dbReference type="BioGRID-ORCS" id="29063">
    <property type="hits" value="12 hits in 1155 CRISPR screens"/>
</dbReference>
<dbReference type="ChiTaRS" id="ZCCHC4">
    <property type="organism name" value="human"/>
</dbReference>
<dbReference type="GenomeRNAi" id="29063"/>
<dbReference type="Pharos" id="Q9H5U6">
    <property type="development level" value="Tbio"/>
</dbReference>
<dbReference type="PRO" id="PR:Q9H5U6"/>
<dbReference type="Proteomes" id="UP000005640">
    <property type="component" value="Chromosome 4"/>
</dbReference>
<dbReference type="RNAct" id="Q9H5U6">
    <property type="molecule type" value="protein"/>
</dbReference>
<dbReference type="Bgee" id="ENSG00000168228">
    <property type="expression patterns" value="Expressed in primordial germ cell in gonad and 109 other cell types or tissues"/>
</dbReference>
<dbReference type="ExpressionAtlas" id="Q9H5U6">
    <property type="expression patterns" value="baseline and differential"/>
</dbReference>
<dbReference type="GO" id="GO:0005737">
    <property type="term" value="C:cytoplasm"/>
    <property type="evidence" value="ECO:0000314"/>
    <property type="project" value="UniProtKB"/>
</dbReference>
<dbReference type="GO" id="GO:0005730">
    <property type="term" value="C:nucleolus"/>
    <property type="evidence" value="ECO:0000314"/>
    <property type="project" value="UniProtKB"/>
</dbReference>
<dbReference type="GO" id="GO:0003676">
    <property type="term" value="F:nucleic acid binding"/>
    <property type="evidence" value="ECO:0007669"/>
    <property type="project" value="InterPro"/>
</dbReference>
<dbReference type="GO" id="GO:0008988">
    <property type="term" value="F:rRNA (adenine-N6-)-methyltransferase activity"/>
    <property type="evidence" value="ECO:0000314"/>
    <property type="project" value="UniProtKB"/>
</dbReference>
<dbReference type="GO" id="GO:1904047">
    <property type="term" value="F:S-adenosyl-L-methionine binding"/>
    <property type="evidence" value="ECO:0000314"/>
    <property type="project" value="UniProtKB"/>
</dbReference>
<dbReference type="GO" id="GO:0008270">
    <property type="term" value="F:zinc ion binding"/>
    <property type="evidence" value="ECO:0000314"/>
    <property type="project" value="UniProtKB"/>
</dbReference>
<dbReference type="GO" id="GO:0045727">
    <property type="term" value="P:positive regulation of translation"/>
    <property type="evidence" value="ECO:0000314"/>
    <property type="project" value="UniProtKB"/>
</dbReference>
<dbReference type="GO" id="GO:0031167">
    <property type="term" value="P:rRNA methylation"/>
    <property type="evidence" value="ECO:0000314"/>
    <property type="project" value="UniProtKB"/>
</dbReference>
<dbReference type="InterPro" id="IPR002052">
    <property type="entry name" value="DNA_methylase_N6_adenine_CS"/>
</dbReference>
<dbReference type="InterPro" id="IPR041370">
    <property type="entry name" value="Mlase_EEF1AKMT1/ZCCHC4"/>
</dbReference>
<dbReference type="InterPro" id="IPR039846">
    <property type="entry name" value="ZCCHC4"/>
</dbReference>
<dbReference type="InterPro" id="IPR010666">
    <property type="entry name" value="Znf_GRF"/>
</dbReference>
<dbReference type="PANTHER" id="PTHR13493:SF3">
    <property type="entry name" value="RRNA N6-ADENOSINE-METHYLTRANSFERASE ZCCHC4"/>
    <property type="match status" value="1"/>
</dbReference>
<dbReference type="PANTHER" id="PTHR13493">
    <property type="entry name" value="ZINC FINGER CCHC DOMAIN-CONTAINING"/>
    <property type="match status" value="1"/>
</dbReference>
<dbReference type="Pfam" id="PF10237">
    <property type="entry name" value="N6-adenineMlase"/>
    <property type="match status" value="1"/>
</dbReference>
<dbReference type="Pfam" id="PF06839">
    <property type="entry name" value="Zn_ribbon_GRF"/>
    <property type="match status" value="1"/>
</dbReference>
<dbReference type="PROSITE" id="PS50216">
    <property type="entry name" value="DHHC"/>
    <property type="match status" value="1"/>
</dbReference>
<dbReference type="PROSITE" id="PS00092">
    <property type="entry name" value="N6_MTASE"/>
    <property type="match status" value="1"/>
</dbReference>
<dbReference type="PROSITE" id="PS51999">
    <property type="entry name" value="ZF_GRF"/>
    <property type="match status" value="1"/>
</dbReference>
<name>ZCHC4_HUMAN</name>
<protein>
    <recommendedName>
        <fullName evidence="13">rRNA N(6)-adenosine-methyltransferase ZCCHC4</fullName>
        <ecNumber evidence="6 7 9">2.1.1.-</ecNumber>
    </recommendedName>
    <alternativeName>
        <fullName evidence="13">Zinc finger CCHC domain-containing protein 4</fullName>
    </alternativeName>
</protein>
<sequence length="513" mass="59010">MAASRNGFEAVEAEGSAGCRGSSGMEVVLPLDPAVPAPLCPHGPTLLFVKVTQGKEETRRFYACSACRDRKDCNFFQWEDEKLSGARLAAREAHNRRCQPPLSRTQCVERYLKFIELPLTQRKFCQTCQQLLLPDDWGQHSEHQVLGNVSITQLRRPSQLLYPLENKKTNAQYLFADRSCQFLVDLLSALGFRRVLCVGTPRLHELIKLTASGDKKSNIKSLLLDIDFRYSQFYMEDSFCHYNMFNHHFFDGKTALEVCRAFLQEDKGEGIIMVTDPPFGGLVEPLAITFKKLIAMWKEGQSQDDSHKELPIFWIFPYFFESRICQFFPSFQMLDYQVDYDNHALYKHGKTGRKQSPVRIFTNIPPNKIILPTEEGYRFCSPCQRYVSLENQHCELCNSCTSKDGRKWNHCFLCKKCVKPSWIHCSICNHCAVPDHSCEGPKHGCFICGELDHKRSTCPNIATSKRANKAVRKQKQRKSNKMKMETTKGQSMNHTSATRRKKRRERAHQYLGS</sequence>
<feature type="chain" id="PRO_0000150952" description="rRNA N(6)-adenosine-methyltransferase ZCCHC4">
    <location>
        <begin position="1"/>
        <end position="513"/>
    </location>
</feature>
<feature type="domain" description="DHHC" evidence="1">
    <location>
        <begin position="395"/>
        <end position="447"/>
    </location>
</feature>
<feature type="zinc finger region" description="GRF-type" evidence="2">
    <location>
        <begin position="40"/>
        <end position="82"/>
    </location>
</feature>
<feature type="zinc finger region" description="CCHC-type">
    <location>
        <begin position="443"/>
        <end position="460"/>
    </location>
</feature>
<feature type="region of interest" description="Regulatory loop" evidence="8">
    <location>
        <begin position="337"/>
        <end position="357"/>
    </location>
</feature>
<feature type="region of interest" description="Disordered" evidence="3">
    <location>
        <begin position="466"/>
        <end position="513"/>
    </location>
</feature>
<feature type="compositionally biased region" description="Basic residues" evidence="3">
    <location>
        <begin position="466"/>
        <end position="481"/>
    </location>
</feature>
<feature type="compositionally biased region" description="Polar residues" evidence="3">
    <location>
        <begin position="487"/>
        <end position="496"/>
    </location>
</feature>
<feature type="compositionally biased region" description="Basic residues" evidence="3">
    <location>
        <begin position="497"/>
        <end position="506"/>
    </location>
</feature>
<feature type="binding site" evidence="2 8 15">
    <location>
        <position position="40"/>
    </location>
    <ligand>
        <name>Zn(2+)</name>
        <dbReference type="ChEBI" id="CHEBI:29105"/>
        <label>1</label>
    </ligand>
</feature>
<feature type="binding site" evidence="2 8 15">
    <location>
        <position position="42"/>
    </location>
    <ligand>
        <name>Zn(2+)</name>
        <dbReference type="ChEBI" id="CHEBI:29105"/>
        <label>1</label>
    </ligand>
</feature>
<feature type="binding site" evidence="2 8 15">
    <location>
        <position position="64"/>
    </location>
    <ligand>
        <name>Zn(2+)</name>
        <dbReference type="ChEBI" id="CHEBI:29105"/>
        <label>1</label>
    </ligand>
</feature>
<feature type="binding site" evidence="2 8 15">
    <location>
        <position position="73"/>
    </location>
    <ligand>
        <name>Zn(2+)</name>
        <dbReference type="ChEBI" id="CHEBI:29105"/>
        <label>1</label>
    </ligand>
</feature>
<feature type="binding site" evidence="8 15">
    <location>
        <position position="125"/>
    </location>
    <ligand>
        <name>Zn(2+)</name>
        <dbReference type="ChEBI" id="CHEBI:29105"/>
        <label>2</label>
    </ligand>
</feature>
<feature type="binding site" evidence="8 15">
    <location>
        <position position="128"/>
    </location>
    <ligand>
        <name>Zn(2+)</name>
        <dbReference type="ChEBI" id="CHEBI:29105"/>
        <label>2</label>
    </ligand>
</feature>
<feature type="binding site" evidence="8 15">
    <location>
        <position position="140"/>
    </location>
    <ligand>
        <name>Zn(2+)</name>
        <dbReference type="ChEBI" id="CHEBI:29105"/>
        <label>2</label>
    </ligand>
</feature>
<feature type="binding site" evidence="8 15">
    <location>
        <position position="143"/>
    </location>
    <ligand>
        <name>Zn(2+)</name>
        <dbReference type="ChEBI" id="CHEBI:29105"/>
        <label>2</label>
    </ligand>
</feature>
<feature type="binding site" evidence="8 15">
    <location>
        <begin position="172"/>
        <end position="175"/>
    </location>
    <ligand>
        <name>S-adenosyl-L-methionine</name>
        <dbReference type="ChEBI" id="CHEBI:59789"/>
    </ligand>
</feature>
<feature type="binding site" evidence="8 15">
    <location>
        <position position="202"/>
    </location>
    <ligand>
        <name>S-adenosyl-L-methionine</name>
        <dbReference type="ChEBI" id="CHEBI:59789"/>
    </ligand>
</feature>
<feature type="binding site" evidence="8 15">
    <location>
        <position position="225"/>
    </location>
    <ligand>
        <name>S-adenosyl-L-methionine</name>
        <dbReference type="ChEBI" id="CHEBI:59789"/>
    </ligand>
</feature>
<feature type="binding site" evidence="8 15">
    <location>
        <begin position="243"/>
        <end position="244"/>
    </location>
    <ligand>
        <name>S-adenosyl-L-methionine</name>
        <dbReference type="ChEBI" id="CHEBI:59789"/>
    </ligand>
</feature>
<feature type="binding site" evidence="8 15">
    <location>
        <position position="276"/>
    </location>
    <ligand>
        <name>S-adenosyl-L-methionine</name>
        <dbReference type="ChEBI" id="CHEBI:59789"/>
    </ligand>
</feature>
<feature type="binding site" evidence="8 15">
    <location>
        <position position="380"/>
    </location>
    <ligand>
        <name>Zn(2+)</name>
        <dbReference type="ChEBI" id="CHEBI:29105"/>
        <label>3</label>
    </ligand>
</feature>
<feature type="binding site" evidence="8 15">
    <location>
        <position position="383"/>
    </location>
    <ligand>
        <name>Zn(2+)</name>
        <dbReference type="ChEBI" id="CHEBI:29105"/>
        <label>3</label>
    </ligand>
</feature>
<feature type="binding site" evidence="8 15">
    <location>
        <position position="393"/>
    </location>
    <ligand>
        <name>Zn(2+)</name>
        <dbReference type="ChEBI" id="CHEBI:29105"/>
        <label>3</label>
    </ligand>
</feature>
<feature type="binding site" evidence="8 15">
    <location>
        <position position="394"/>
    </location>
    <ligand>
        <name>Zn(2+)</name>
        <dbReference type="ChEBI" id="CHEBI:29105"/>
        <label>4</label>
    </ligand>
</feature>
<feature type="binding site" evidence="8 15">
    <location>
        <position position="397"/>
    </location>
    <ligand>
        <name>Zn(2+)</name>
        <dbReference type="ChEBI" id="CHEBI:29105"/>
        <label>4</label>
    </ligand>
</feature>
<feature type="binding site" evidence="8 15">
    <location>
        <position position="400"/>
    </location>
    <ligand>
        <name>Zn(2+)</name>
        <dbReference type="ChEBI" id="CHEBI:29105"/>
        <label>3</label>
    </ligand>
</feature>
<feature type="binding site" evidence="8 15">
    <location>
        <position position="410"/>
    </location>
    <ligand>
        <name>Zn(2+)</name>
        <dbReference type="ChEBI" id="CHEBI:29105"/>
        <label>4</label>
    </ligand>
</feature>
<feature type="binding site" evidence="8 15">
    <location>
        <position position="411"/>
    </location>
    <ligand>
        <name>Zn(2+)</name>
        <dbReference type="ChEBI" id="CHEBI:29105"/>
        <label>5</label>
    </ligand>
</feature>
<feature type="binding site" evidence="8 15">
    <location>
        <position position="414"/>
    </location>
    <ligand>
        <name>Zn(2+)</name>
        <dbReference type="ChEBI" id="CHEBI:29105"/>
        <label>5</label>
    </ligand>
</feature>
<feature type="binding site" evidence="8 15">
    <location>
        <position position="417"/>
    </location>
    <ligand>
        <name>Zn(2+)</name>
        <dbReference type="ChEBI" id="CHEBI:29105"/>
        <label>4</label>
    </ligand>
</feature>
<feature type="binding site" evidence="8 15">
    <location>
        <position position="424"/>
    </location>
    <ligand>
        <name>Zn(2+)</name>
        <dbReference type="ChEBI" id="CHEBI:29105"/>
        <label>5</label>
    </ligand>
</feature>
<feature type="binding site" evidence="8 15">
    <location>
        <position position="425"/>
    </location>
    <ligand>
        <name>Zn(2+)</name>
        <dbReference type="ChEBI" id="CHEBI:29105"/>
        <label>6</label>
    </ligand>
</feature>
<feature type="binding site" evidence="8 15">
    <location>
        <position position="428"/>
    </location>
    <ligand>
        <name>Zn(2+)</name>
        <dbReference type="ChEBI" id="CHEBI:29105"/>
        <label>6</label>
    </ligand>
</feature>
<feature type="binding site" evidence="8 15">
    <location>
        <position position="431"/>
    </location>
    <ligand>
        <name>Zn(2+)</name>
        <dbReference type="ChEBI" id="CHEBI:29105"/>
        <label>5</label>
    </ligand>
</feature>
<feature type="binding site" evidence="8 15">
    <location>
        <position position="436"/>
    </location>
    <ligand>
        <name>Zn(2+)</name>
        <dbReference type="ChEBI" id="CHEBI:29105"/>
        <label>6</label>
    </ligand>
</feature>
<feature type="binding site" evidence="8 15">
    <location>
        <position position="438"/>
    </location>
    <ligand>
        <name>Zn(2+)</name>
        <dbReference type="ChEBI" id="CHEBI:29105"/>
        <label>6</label>
    </ligand>
</feature>
<feature type="splice variant" id="VSP_043359" description="In isoform 2." evidence="11">
    <location>
        <begin position="230"/>
        <end position="513"/>
    </location>
</feature>
<feature type="splice variant" id="VSP_043360" description="In isoform 3." evidence="11">
    <location>
        <begin position="470"/>
        <end position="472"/>
    </location>
</feature>
<feature type="sequence variant" id="VAR_053751" description="In dbSNP:rs3752873.">
    <original>P</original>
    <variation>L</variation>
    <location>
        <position position="382"/>
    </location>
</feature>
<feature type="sequence variant" id="VAR_024925" description="In dbSNP:rs315675." evidence="4 5 10">
    <original>L</original>
    <variation>H</variation>
    <location>
        <position position="396"/>
    </location>
</feature>
<feature type="mutagenesis site" description="Abolished rRNA methyltransferase activity." evidence="8">
    <original>Y</original>
    <variation>A</variation>
    <location>
        <position position="173"/>
    </location>
</feature>
<feature type="mutagenesis site" description="Loss of methyltransferase activity." evidence="6">
    <original>DPPF</original>
    <variation>AAAA</variation>
    <location>
        <begin position="276"/>
        <end position="279"/>
    </location>
</feature>
<feature type="mutagenesis site" description="Loss of methyltransferase activity." evidence="9">
    <original>D</original>
    <variation>A</variation>
    <location>
        <position position="276"/>
    </location>
</feature>
<feature type="mutagenesis site" description="Strongly impaired rRNA methyltransferase activity." evidence="8">
    <original>Y</original>
    <variation>A</variation>
    <location>
        <position position="340"/>
    </location>
</feature>
<feature type="mutagenesis site" description="Increased rRNA methylation." evidence="8">
    <original>D</original>
    <variation>A</variation>
    <location>
        <position position="341"/>
    </location>
</feature>
<feature type="mutagenesis site" description="Strongly impaired rRNA methyltransferase activity." evidence="8">
    <original>N</original>
    <variation>A</variation>
    <location>
        <position position="342"/>
    </location>
</feature>
<feature type="mutagenesis site" description="Decreased S-adenosyl-L-methionine-binding." evidence="8">
    <original>H</original>
    <variation>A</variation>
    <location>
        <position position="343"/>
    </location>
</feature>
<feature type="mutagenesis site" description="Strongly impaired rRNA methyltransferase activity." evidence="8">
    <original>H</original>
    <variation>A</variation>
    <location>
        <position position="343"/>
    </location>
</feature>
<feature type="mutagenesis site" description="Increased rRNA methylation." evidence="8">
    <original>L</original>
    <variation>A</variation>
    <location>
        <position position="345"/>
    </location>
</feature>
<feature type="sequence conflict" description="In Ref. 3; BAG61250." evidence="13" ref="3">
    <original>H</original>
    <variation>R</variation>
    <location>
        <position position="348"/>
    </location>
</feature>
<feature type="strand" evidence="16">
    <location>
        <begin position="46"/>
        <end position="50"/>
    </location>
</feature>
<feature type="turn" evidence="16">
    <location>
        <begin position="53"/>
        <end position="55"/>
    </location>
</feature>
<feature type="strand" evidence="16">
    <location>
        <begin position="60"/>
        <end position="63"/>
    </location>
</feature>
<feature type="turn" evidence="16">
    <location>
        <begin position="70"/>
        <end position="72"/>
    </location>
</feature>
<feature type="strand" evidence="16">
    <location>
        <begin position="77"/>
        <end position="80"/>
    </location>
</feature>
<feature type="helix" evidence="16">
    <location>
        <begin position="85"/>
        <end position="97"/>
    </location>
</feature>
<feature type="helix" evidence="16">
    <location>
        <begin position="104"/>
        <end position="114"/>
    </location>
</feature>
<feature type="helix" evidence="16">
    <location>
        <begin position="119"/>
        <end position="121"/>
    </location>
</feature>
<feature type="strand" evidence="16">
    <location>
        <begin position="123"/>
        <end position="125"/>
    </location>
</feature>
<feature type="turn" evidence="16">
    <location>
        <begin position="126"/>
        <end position="129"/>
    </location>
</feature>
<feature type="strand" evidence="16">
    <location>
        <begin position="130"/>
        <end position="132"/>
    </location>
</feature>
<feature type="helix" evidence="16">
    <location>
        <begin position="134"/>
        <end position="140"/>
    </location>
</feature>
<feature type="helix" evidence="16">
    <location>
        <begin position="151"/>
        <end position="154"/>
    </location>
</feature>
<feature type="helix" evidence="16">
    <location>
        <begin position="157"/>
        <end position="159"/>
    </location>
</feature>
<feature type="turn" evidence="16">
    <location>
        <begin position="167"/>
        <end position="170"/>
    </location>
</feature>
<feature type="helix" evidence="16">
    <location>
        <begin position="177"/>
        <end position="190"/>
    </location>
</feature>
<feature type="strand" evidence="16">
    <location>
        <begin position="193"/>
        <end position="199"/>
    </location>
</feature>
<feature type="helix" evidence="16">
    <location>
        <begin position="201"/>
        <end position="212"/>
    </location>
</feature>
<feature type="strand" evidence="16">
    <location>
        <begin position="220"/>
        <end position="226"/>
    </location>
</feature>
<feature type="helix" evidence="16">
    <location>
        <begin position="228"/>
        <end position="232"/>
    </location>
</feature>
<feature type="turn" evidence="16">
    <location>
        <begin position="236"/>
        <end position="238"/>
    </location>
</feature>
<feature type="strand" evidence="16">
    <location>
        <begin position="239"/>
        <end position="243"/>
    </location>
</feature>
<feature type="turn" evidence="16">
    <location>
        <begin position="244"/>
        <end position="247"/>
    </location>
</feature>
<feature type="helix" evidence="16">
    <location>
        <begin position="253"/>
        <end position="264"/>
    </location>
</feature>
<feature type="helix" evidence="16">
    <location>
        <begin position="265"/>
        <end position="268"/>
    </location>
</feature>
<feature type="strand" evidence="16">
    <location>
        <begin position="270"/>
        <end position="275"/>
    </location>
</feature>
<feature type="strand" evidence="16">
    <location>
        <begin position="279"/>
        <end position="281"/>
    </location>
</feature>
<feature type="helix" evidence="16">
    <location>
        <begin position="284"/>
        <end position="298"/>
    </location>
</feature>
<feature type="strand" evidence="16">
    <location>
        <begin position="312"/>
        <end position="317"/>
    </location>
</feature>
<feature type="helix" evidence="16">
    <location>
        <begin position="318"/>
        <end position="320"/>
    </location>
</feature>
<feature type="helix" evidence="16">
    <location>
        <begin position="321"/>
        <end position="327"/>
    </location>
</feature>
<feature type="strand" evidence="16">
    <location>
        <begin position="340"/>
        <end position="342"/>
    </location>
</feature>
<feature type="strand" evidence="16">
    <location>
        <begin position="350"/>
        <end position="352"/>
    </location>
</feature>
<feature type="strand" evidence="16">
    <location>
        <begin position="358"/>
        <end position="364"/>
    </location>
</feature>
<feature type="helix" evidence="16">
    <location>
        <begin position="366"/>
        <end position="368"/>
    </location>
</feature>
<feature type="helix" evidence="16">
    <location>
        <begin position="373"/>
        <end position="375"/>
    </location>
</feature>
<feature type="strand" evidence="16">
    <location>
        <begin position="376"/>
        <end position="380"/>
    </location>
</feature>
<feature type="turn" evidence="16">
    <location>
        <begin position="381"/>
        <end position="384"/>
    </location>
</feature>
<feature type="strand" evidence="16">
    <location>
        <begin position="385"/>
        <end position="388"/>
    </location>
</feature>
<feature type="turn" evidence="16">
    <location>
        <begin position="395"/>
        <end position="398"/>
    </location>
</feature>
<feature type="strand" evidence="16">
    <location>
        <begin position="404"/>
        <end position="406"/>
    </location>
</feature>
<feature type="strand" evidence="16">
    <location>
        <begin position="409"/>
        <end position="411"/>
    </location>
</feature>
<feature type="turn" evidence="16">
    <location>
        <begin position="412"/>
        <end position="415"/>
    </location>
</feature>
<feature type="strand" evidence="16">
    <location>
        <begin position="416"/>
        <end position="418"/>
    </location>
</feature>
<feature type="turn" evidence="16">
    <location>
        <begin position="426"/>
        <end position="428"/>
    </location>
</feature>
<feature type="strand" evidence="16">
    <location>
        <begin position="430"/>
        <end position="432"/>
    </location>
</feature>
<keyword id="KW-0002">3D-structure</keyword>
<keyword id="KW-0025">Alternative splicing</keyword>
<keyword id="KW-0963">Cytoplasm</keyword>
<keyword id="KW-0479">Metal-binding</keyword>
<keyword id="KW-0489">Methyltransferase</keyword>
<keyword id="KW-0539">Nucleus</keyword>
<keyword id="KW-1267">Proteomics identification</keyword>
<keyword id="KW-1185">Reference proteome</keyword>
<keyword id="KW-0949">S-adenosyl-L-methionine</keyword>
<keyword id="KW-0808">Transferase</keyword>
<keyword id="KW-0862">Zinc</keyword>
<keyword id="KW-0863">Zinc-finger</keyword>
<evidence type="ECO:0000255" key="1">
    <source>
        <dbReference type="PROSITE-ProRule" id="PRU00067"/>
    </source>
</evidence>
<evidence type="ECO:0000255" key="2">
    <source>
        <dbReference type="PROSITE-ProRule" id="PRU01343"/>
    </source>
</evidence>
<evidence type="ECO:0000256" key="3">
    <source>
        <dbReference type="SAM" id="MobiDB-lite"/>
    </source>
</evidence>
<evidence type="ECO:0000269" key="4">
    <source>
    </source>
</evidence>
<evidence type="ECO:0000269" key="5">
    <source>
    </source>
</evidence>
<evidence type="ECO:0000269" key="6">
    <source>
    </source>
</evidence>
<evidence type="ECO:0000269" key="7">
    <source>
    </source>
</evidence>
<evidence type="ECO:0000269" key="8">
    <source>
    </source>
</evidence>
<evidence type="ECO:0000269" key="9">
    <source>
    </source>
</evidence>
<evidence type="ECO:0000269" key="10">
    <source ref="2"/>
</evidence>
<evidence type="ECO:0000303" key="11">
    <source>
    </source>
</evidence>
<evidence type="ECO:0000303" key="12">
    <source>
    </source>
</evidence>
<evidence type="ECO:0000305" key="13"/>
<evidence type="ECO:0000312" key="14">
    <source>
        <dbReference type="HGNC" id="HGNC:22917"/>
    </source>
</evidence>
<evidence type="ECO:0007744" key="15">
    <source>
        <dbReference type="PDB" id="6UCA"/>
    </source>
</evidence>
<evidence type="ECO:0007829" key="16">
    <source>
        <dbReference type="PDB" id="6UCA"/>
    </source>
</evidence>